<reference key="1">
    <citation type="journal article" date="2007" name="BMC Plant Biol.">
        <title>Complete DNA sequences of the plastid genomes of two parasitic flowering plant species, Cuscuta reflexa and Cuscuta gronovii.</title>
        <authorList>
            <person name="Funk H.T."/>
            <person name="Berg S."/>
            <person name="Krupinska K."/>
            <person name="Maier U.-G."/>
            <person name="Krause K."/>
        </authorList>
    </citation>
    <scope>NUCLEOTIDE SEQUENCE [LARGE SCALE GENOMIC DNA]</scope>
</reference>
<keyword id="KW-0934">Plastid</keyword>
<keyword id="KW-0687">Ribonucleoprotein</keyword>
<keyword id="KW-0689">Ribosomal protein</keyword>
<keyword id="KW-0694">RNA-binding</keyword>
<keyword id="KW-0699">rRNA-binding</keyword>
<proteinExistence type="inferred from homology"/>
<evidence type="ECO:0000255" key="1">
    <source>
        <dbReference type="HAMAP-Rule" id="MF_01367"/>
    </source>
</evidence>
<evidence type="ECO:0000305" key="2"/>
<protein>
    <recommendedName>
        <fullName evidence="1">Large ribosomal subunit protein uL14c</fullName>
    </recommendedName>
    <alternativeName>
        <fullName evidence="2">50S ribosomal protein L14, plastid</fullName>
    </alternativeName>
</protein>
<name>RK14_CUSGR</name>
<accession>A7M932</accession>
<feature type="chain" id="PRO_0000355873" description="Large ribosomal subunit protein uL14c">
    <location>
        <begin position="1"/>
        <end position="122"/>
    </location>
</feature>
<dbReference type="EMBL" id="AM711639">
    <property type="protein sequence ID" value="CAM98360.1"/>
    <property type="molecule type" value="Genomic_DNA"/>
</dbReference>
<dbReference type="RefSeq" id="YP_001430073.1">
    <property type="nucleotide sequence ID" value="NC_009765.1"/>
</dbReference>
<dbReference type="SMR" id="A7M932"/>
<dbReference type="GeneID" id="5536706"/>
<dbReference type="GO" id="GO:0022625">
    <property type="term" value="C:cytosolic large ribosomal subunit"/>
    <property type="evidence" value="ECO:0007669"/>
    <property type="project" value="TreeGrafter"/>
</dbReference>
<dbReference type="GO" id="GO:0009536">
    <property type="term" value="C:plastid"/>
    <property type="evidence" value="ECO:0007669"/>
    <property type="project" value="UniProtKB-SubCell"/>
</dbReference>
<dbReference type="GO" id="GO:0070180">
    <property type="term" value="F:large ribosomal subunit rRNA binding"/>
    <property type="evidence" value="ECO:0007669"/>
    <property type="project" value="TreeGrafter"/>
</dbReference>
<dbReference type="GO" id="GO:0003735">
    <property type="term" value="F:structural constituent of ribosome"/>
    <property type="evidence" value="ECO:0007669"/>
    <property type="project" value="InterPro"/>
</dbReference>
<dbReference type="GO" id="GO:0006412">
    <property type="term" value="P:translation"/>
    <property type="evidence" value="ECO:0007669"/>
    <property type="project" value="InterPro"/>
</dbReference>
<dbReference type="CDD" id="cd00337">
    <property type="entry name" value="Ribosomal_uL14"/>
    <property type="match status" value="1"/>
</dbReference>
<dbReference type="FunFam" id="2.40.150.20:FF:000002">
    <property type="entry name" value="50S ribosomal protein L14, chloroplastic"/>
    <property type="match status" value="1"/>
</dbReference>
<dbReference type="Gene3D" id="2.40.150.20">
    <property type="entry name" value="Ribosomal protein L14"/>
    <property type="match status" value="1"/>
</dbReference>
<dbReference type="HAMAP" id="MF_01367">
    <property type="entry name" value="Ribosomal_uL14"/>
    <property type="match status" value="1"/>
</dbReference>
<dbReference type="InterPro" id="IPR000218">
    <property type="entry name" value="Ribosomal_uL14"/>
</dbReference>
<dbReference type="InterPro" id="IPR005745">
    <property type="entry name" value="Ribosomal_uL14_bac-type"/>
</dbReference>
<dbReference type="InterPro" id="IPR019972">
    <property type="entry name" value="Ribosomal_uL14_CS"/>
</dbReference>
<dbReference type="InterPro" id="IPR036853">
    <property type="entry name" value="Ribosomal_uL14_sf"/>
</dbReference>
<dbReference type="NCBIfam" id="TIGR01067">
    <property type="entry name" value="rplN_bact"/>
    <property type="match status" value="1"/>
</dbReference>
<dbReference type="PANTHER" id="PTHR11761">
    <property type="entry name" value="50S/60S RIBOSOMAL PROTEIN L14/L23"/>
    <property type="match status" value="1"/>
</dbReference>
<dbReference type="PANTHER" id="PTHR11761:SF3">
    <property type="entry name" value="LARGE RIBOSOMAL SUBUNIT PROTEIN UL14M"/>
    <property type="match status" value="1"/>
</dbReference>
<dbReference type="Pfam" id="PF00238">
    <property type="entry name" value="Ribosomal_L14"/>
    <property type="match status" value="1"/>
</dbReference>
<dbReference type="SMART" id="SM01374">
    <property type="entry name" value="Ribosomal_L14"/>
    <property type="match status" value="1"/>
</dbReference>
<dbReference type="SUPFAM" id="SSF50193">
    <property type="entry name" value="Ribosomal protein L14"/>
    <property type="match status" value="1"/>
</dbReference>
<dbReference type="PROSITE" id="PS00049">
    <property type="entry name" value="RIBOSOMAL_L14"/>
    <property type="match status" value="1"/>
</dbReference>
<gene>
    <name evidence="1" type="primary">rpl14</name>
</gene>
<comment type="function">
    <text evidence="1">Binds to 23S rRNA.</text>
</comment>
<comment type="subunit">
    <text evidence="1">Part of the 50S ribosomal subunit.</text>
</comment>
<comment type="subcellular location">
    <subcellularLocation>
        <location>Plastid</location>
    </subcellularLocation>
</comment>
<comment type="similarity">
    <text evidence="1">Belongs to the universal ribosomal protein uL14 family.</text>
</comment>
<comment type="caution">
    <text evidence="2">Young tissue from this organism is photosynthetic and contains some thylakoids, although the photosynthetic activity does not exceed the light compensation point.</text>
</comment>
<sequence>MIQSQTQLNVADNSGARKIMCIRIIGSSNRRYAHIGDIIVAVIKDAVPNMTLEKSEVVRAVIVRTRKELKRDNGIILRYDDNAAVIIDKEGNPKGTRIFGAIPRELRKLNFNKIVSLAPEVL</sequence>
<organism>
    <name type="scientific">Cuscuta gronovii</name>
    <name type="common">Common dodder</name>
    <name type="synonym">Epithymum gronovii</name>
    <dbReference type="NCBI Taxonomy" id="35886"/>
    <lineage>
        <taxon>Eukaryota</taxon>
        <taxon>Viridiplantae</taxon>
        <taxon>Streptophyta</taxon>
        <taxon>Embryophyta</taxon>
        <taxon>Tracheophyta</taxon>
        <taxon>Spermatophyta</taxon>
        <taxon>Magnoliopsida</taxon>
        <taxon>eudicotyledons</taxon>
        <taxon>Gunneridae</taxon>
        <taxon>Pentapetalae</taxon>
        <taxon>asterids</taxon>
        <taxon>lamiids</taxon>
        <taxon>Solanales</taxon>
        <taxon>Convolvulaceae</taxon>
        <taxon>Cuscuteae</taxon>
        <taxon>Cuscuta</taxon>
        <taxon>Cuscuta subgen. Grammica</taxon>
        <taxon>Cuscuta sect. Oxycarpae</taxon>
    </lineage>
</organism>
<geneLocation type="plastid"/>